<protein>
    <recommendedName>
        <fullName evidence="1">Queuine tRNA-ribosyltransferase</fullName>
        <ecNumber evidence="1">2.4.2.29</ecNumber>
    </recommendedName>
    <alternativeName>
        <fullName evidence="1">Guanine insertion enzyme</fullName>
    </alternativeName>
    <alternativeName>
        <fullName evidence="1">tRNA-guanine transglycosylase</fullName>
    </alternativeName>
</protein>
<dbReference type="EC" id="2.4.2.29" evidence="1"/>
<dbReference type="EMBL" id="CP000849">
    <property type="protein sequence ID" value="ABV78597.1"/>
    <property type="molecule type" value="Genomic_DNA"/>
</dbReference>
<dbReference type="RefSeq" id="WP_012151566.1">
    <property type="nucleotide sequence ID" value="NC_009883.1"/>
</dbReference>
<dbReference type="SMR" id="A8GUA5"/>
<dbReference type="KEGG" id="rbo:A1I_00995"/>
<dbReference type="HOGENOM" id="CLU_022060_0_1_5"/>
<dbReference type="UniPathway" id="UPA00392"/>
<dbReference type="GO" id="GO:0005737">
    <property type="term" value="C:cytoplasm"/>
    <property type="evidence" value="ECO:0007669"/>
    <property type="project" value="TreeGrafter"/>
</dbReference>
<dbReference type="GO" id="GO:0046872">
    <property type="term" value="F:metal ion binding"/>
    <property type="evidence" value="ECO:0007669"/>
    <property type="project" value="UniProtKB-KW"/>
</dbReference>
<dbReference type="GO" id="GO:0008479">
    <property type="term" value="F:tRNA-guanosine(34) queuine transglycosylase activity"/>
    <property type="evidence" value="ECO:0007669"/>
    <property type="project" value="UniProtKB-UniRule"/>
</dbReference>
<dbReference type="GO" id="GO:0008616">
    <property type="term" value="P:queuosine biosynthetic process"/>
    <property type="evidence" value="ECO:0007669"/>
    <property type="project" value="UniProtKB-UniRule"/>
</dbReference>
<dbReference type="GO" id="GO:0002099">
    <property type="term" value="P:tRNA wobble guanine modification"/>
    <property type="evidence" value="ECO:0007669"/>
    <property type="project" value="TreeGrafter"/>
</dbReference>
<dbReference type="GO" id="GO:0101030">
    <property type="term" value="P:tRNA-guanine transglycosylation"/>
    <property type="evidence" value="ECO:0007669"/>
    <property type="project" value="InterPro"/>
</dbReference>
<dbReference type="FunFam" id="3.20.20.105:FF:000001">
    <property type="entry name" value="Queuine tRNA-ribosyltransferase"/>
    <property type="match status" value="1"/>
</dbReference>
<dbReference type="Gene3D" id="3.20.20.105">
    <property type="entry name" value="Queuine tRNA-ribosyltransferase-like"/>
    <property type="match status" value="1"/>
</dbReference>
<dbReference type="HAMAP" id="MF_00168">
    <property type="entry name" value="Q_tRNA_Tgt"/>
    <property type="match status" value="1"/>
</dbReference>
<dbReference type="InterPro" id="IPR050076">
    <property type="entry name" value="ArchSynthase1/Queuine_TRR"/>
</dbReference>
<dbReference type="InterPro" id="IPR004803">
    <property type="entry name" value="TGT"/>
</dbReference>
<dbReference type="InterPro" id="IPR036511">
    <property type="entry name" value="TGT-like_sf"/>
</dbReference>
<dbReference type="InterPro" id="IPR002616">
    <property type="entry name" value="tRNA_ribo_trans-like"/>
</dbReference>
<dbReference type="NCBIfam" id="TIGR00430">
    <property type="entry name" value="Q_tRNA_tgt"/>
    <property type="match status" value="1"/>
</dbReference>
<dbReference type="NCBIfam" id="TIGR00449">
    <property type="entry name" value="tgt_general"/>
    <property type="match status" value="1"/>
</dbReference>
<dbReference type="PANTHER" id="PTHR46499">
    <property type="entry name" value="QUEUINE TRNA-RIBOSYLTRANSFERASE"/>
    <property type="match status" value="1"/>
</dbReference>
<dbReference type="PANTHER" id="PTHR46499:SF1">
    <property type="entry name" value="QUEUINE TRNA-RIBOSYLTRANSFERASE"/>
    <property type="match status" value="1"/>
</dbReference>
<dbReference type="Pfam" id="PF01702">
    <property type="entry name" value="TGT"/>
    <property type="match status" value="1"/>
</dbReference>
<dbReference type="SUPFAM" id="SSF51713">
    <property type="entry name" value="tRNA-guanine transglycosylase"/>
    <property type="match status" value="1"/>
</dbReference>
<sequence>MSKFSFNINHQYKKARSGIITTAHGNIRTPAFMPVGTRGTVKAMLPESVAETGADILLGNTYHLMLQPSAERIAKLGGLHKFMNWGKPILTDSGGFQVMSLSKLRKITEEGVSFNSHINGDKYLLTPERSTEIQHLLGSTITMAFDECTPYPATFEEAKTSMQLTTRWAHRSREAFVKRDGYAQFGIIQGSTYEELREQSAKDLIELDFEGYAIGGLAVGEGQELMFKVLDYAPDFLPQNKPRYLMGVGKPADIIGAVSRGVDMFDCVIPTRSGRNGQAFTKYGTVNIRNSKYAEDNDPLEADCLCPACQNYSKAYLHHLVRIGEILGAMLMTWHNLTYFQNLMSRIREYIALGKDFDFTT</sequence>
<evidence type="ECO:0000255" key="1">
    <source>
        <dbReference type="HAMAP-Rule" id="MF_00168"/>
    </source>
</evidence>
<accession>A8GUA5</accession>
<comment type="function">
    <text evidence="1">Catalyzes the base-exchange of a guanine (G) residue with the queuine precursor 7-aminomethyl-7-deazaguanine (PreQ1) at position 34 (anticodon wobble position) in tRNAs with GU(N) anticodons (tRNA-Asp, -Asn, -His and -Tyr). Catalysis occurs through a double-displacement mechanism. The nucleophile active site attacks the C1' of nucleotide 34 to detach the guanine base from the RNA, forming a covalent enzyme-RNA intermediate. The proton acceptor active site deprotonates the incoming PreQ1, allowing a nucleophilic attack on the C1' of the ribose to form the product. After dissociation, two additional enzymatic reactions on the tRNA convert PreQ1 to queuine (Q), resulting in the hypermodified nucleoside queuosine (7-(((4,5-cis-dihydroxy-2-cyclopenten-1-yl)amino)methyl)-7-deazaguanosine).</text>
</comment>
<comment type="catalytic activity">
    <reaction evidence="1">
        <text>7-aminomethyl-7-carbaguanine + guanosine(34) in tRNA = 7-aminomethyl-7-carbaguanosine(34) in tRNA + guanine</text>
        <dbReference type="Rhea" id="RHEA:24104"/>
        <dbReference type="Rhea" id="RHEA-COMP:10341"/>
        <dbReference type="Rhea" id="RHEA-COMP:10342"/>
        <dbReference type="ChEBI" id="CHEBI:16235"/>
        <dbReference type="ChEBI" id="CHEBI:58703"/>
        <dbReference type="ChEBI" id="CHEBI:74269"/>
        <dbReference type="ChEBI" id="CHEBI:82833"/>
        <dbReference type="EC" id="2.4.2.29"/>
    </reaction>
</comment>
<comment type="cofactor">
    <cofactor evidence="1">
        <name>Zn(2+)</name>
        <dbReference type="ChEBI" id="CHEBI:29105"/>
    </cofactor>
    <text evidence="1">Binds 1 zinc ion per subunit.</text>
</comment>
<comment type="pathway">
    <text evidence="1">tRNA modification; tRNA-queuosine biosynthesis.</text>
</comment>
<comment type="subunit">
    <text evidence="1">Homodimer. Within each dimer, one monomer is responsible for RNA recognition and catalysis, while the other monomer binds to the replacement base PreQ1.</text>
</comment>
<comment type="similarity">
    <text evidence="1">Belongs to the queuine tRNA-ribosyltransferase family.</text>
</comment>
<gene>
    <name evidence="1" type="primary">tgt</name>
    <name type="ordered locus">A1I_00995</name>
</gene>
<organism>
    <name type="scientific">Rickettsia bellii (strain OSU 85-389)</name>
    <dbReference type="NCBI Taxonomy" id="391896"/>
    <lineage>
        <taxon>Bacteria</taxon>
        <taxon>Pseudomonadati</taxon>
        <taxon>Pseudomonadota</taxon>
        <taxon>Alphaproteobacteria</taxon>
        <taxon>Rickettsiales</taxon>
        <taxon>Rickettsiaceae</taxon>
        <taxon>Rickettsieae</taxon>
        <taxon>Rickettsia</taxon>
        <taxon>belli group</taxon>
    </lineage>
</organism>
<feature type="chain" id="PRO_1000016837" description="Queuine tRNA-ribosyltransferase">
    <location>
        <begin position="1"/>
        <end position="361"/>
    </location>
</feature>
<feature type="region of interest" description="RNA binding" evidence="1">
    <location>
        <begin position="247"/>
        <end position="253"/>
    </location>
</feature>
<feature type="region of interest" description="RNA binding; important for wobble base 34 recognition" evidence="1">
    <location>
        <begin position="271"/>
        <end position="275"/>
    </location>
</feature>
<feature type="active site" description="Proton acceptor" evidence="1">
    <location>
        <position position="92"/>
    </location>
</feature>
<feature type="active site" description="Nucleophile" evidence="1">
    <location>
        <position position="266"/>
    </location>
</feature>
<feature type="binding site" evidence="1">
    <location>
        <begin position="92"/>
        <end position="96"/>
    </location>
    <ligand>
        <name>substrate</name>
    </ligand>
</feature>
<feature type="binding site" evidence="1">
    <location>
        <position position="146"/>
    </location>
    <ligand>
        <name>substrate</name>
    </ligand>
</feature>
<feature type="binding site" evidence="1">
    <location>
        <position position="189"/>
    </location>
    <ligand>
        <name>substrate</name>
    </ligand>
</feature>
<feature type="binding site" evidence="1">
    <location>
        <position position="216"/>
    </location>
    <ligand>
        <name>substrate</name>
    </ligand>
</feature>
<feature type="binding site" evidence="1">
    <location>
        <position position="304"/>
    </location>
    <ligand>
        <name>Zn(2+)</name>
        <dbReference type="ChEBI" id="CHEBI:29105"/>
    </ligand>
</feature>
<feature type="binding site" evidence="1">
    <location>
        <position position="306"/>
    </location>
    <ligand>
        <name>Zn(2+)</name>
        <dbReference type="ChEBI" id="CHEBI:29105"/>
    </ligand>
</feature>
<feature type="binding site" evidence="1">
    <location>
        <position position="309"/>
    </location>
    <ligand>
        <name>Zn(2+)</name>
        <dbReference type="ChEBI" id="CHEBI:29105"/>
    </ligand>
</feature>
<feature type="binding site" evidence="1">
    <location>
        <position position="335"/>
    </location>
    <ligand>
        <name>Zn(2+)</name>
        <dbReference type="ChEBI" id="CHEBI:29105"/>
    </ligand>
</feature>
<reference key="1">
    <citation type="submission" date="2007-09" db="EMBL/GenBank/DDBJ databases">
        <title>Complete genome sequencing of Rickettsia bellii.</title>
        <authorList>
            <person name="Madan A."/>
            <person name="Lee H."/>
            <person name="Madan A."/>
            <person name="Yoon J.-G."/>
            <person name="Ryu G.-Y."/>
            <person name="Dasch G."/>
            <person name="Ereemeva M."/>
        </authorList>
    </citation>
    <scope>NUCLEOTIDE SEQUENCE [LARGE SCALE GENOMIC DNA]</scope>
    <source>
        <strain>OSU 85-389</strain>
    </source>
</reference>
<name>TGT_RICB8</name>
<proteinExistence type="inferred from homology"/>
<keyword id="KW-0328">Glycosyltransferase</keyword>
<keyword id="KW-0479">Metal-binding</keyword>
<keyword id="KW-0671">Queuosine biosynthesis</keyword>
<keyword id="KW-0808">Transferase</keyword>
<keyword id="KW-0819">tRNA processing</keyword>
<keyword id="KW-0862">Zinc</keyword>